<gene>
    <name evidence="1" type="primary">mdh</name>
    <name type="ordered locus">Mpop_1587</name>
</gene>
<name>MDH_METPB</name>
<protein>
    <recommendedName>
        <fullName evidence="1">Malate dehydrogenase</fullName>
        <ecNumber evidence="1">1.1.1.37</ecNumber>
    </recommendedName>
</protein>
<sequence length="320" mass="33472">MARSKIALIGAGQIGGTLAHLAGLKELGDVVLFDIVDGVPQGKALDIAESAPVDGFDAKYSGASDYSAIAGADVVIVTAGVPRKPGMSRDDLIGINLKVMEAVGAGIKEHAPNAFVICITNPLDAMVWALQKFSGLPTNKVVGMAGVLDSARFRHFLAEEFGVSVEDVTAFVLGGHGDDMVPLTRYSTVAGVPLTDLVKLGWTTQEKLDAMVERTRKGGGEIVNLLKTGSAFYAPASSAIAMAESYLRDKKRVLPCAAYLAGEYGVDGLYVGVPVVIGENGVERVLEVTFNEDEKAMFEKSVGAVKGLIAACQGINDKLA</sequence>
<evidence type="ECO:0000255" key="1">
    <source>
        <dbReference type="HAMAP-Rule" id="MF_00487"/>
    </source>
</evidence>
<keyword id="KW-0520">NAD</keyword>
<keyword id="KW-0560">Oxidoreductase</keyword>
<keyword id="KW-0816">Tricarboxylic acid cycle</keyword>
<dbReference type="EC" id="1.1.1.37" evidence="1"/>
<dbReference type="EMBL" id="CP001029">
    <property type="protein sequence ID" value="ACB79751.1"/>
    <property type="molecule type" value="Genomic_DNA"/>
</dbReference>
<dbReference type="RefSeq" id="WP_012453499.1">
    <property type="nucleotide sequence ID" value="NC_010725.1"/>
</dbReference>
<dbReference type="SMR" id="B1ZG93"/>
<dbReference type="STRING" id="441620.Mpop_1587"/>
<dbReference type="KEGG" id="mpo:Mpop_1587"/>
<dbReference type="eggNOG" id="COG0039">
    <property type="taxonomic scope" value="Bacteria"/>
</dbReference>
<dbReference type="HOGENOM" id="CLU_045401_2_1_5"/>
<dbReference type="OrthoDB" id="9802969at2"/>
<dbReference type="Proteomes" id="UP000007136">
    <property type="component" value="Chromosome"/>
</dbReference>
<dbReference type="GO" id="GO:0004459">
    <property type="term" value="F:L-lactate dehydrogenase activity"/>
    <property type="evidence" value="ECO:0007669"/>
    <property type="project" value="TreeGrafter"/>
</dbReference>
<dbReference type="GO" id="GO:0030060">
    <property type="term" value="F:L-malate dehydrogenase (NAD+) activity"/>
    <property type="evidence" value="ECO:0007669"/>
    <property type="project" value="UniProtKB-UniRule"/>
</dbReference>
<dbReference type="GO" id="GO:0006089">
    <property type="term" value="P:lactate metabolic process"/>
    <property type="evidence" value="ECO:0007669"/>
    <property type="project" value="TreeGrafter"/>
</dbReference>
<dbReference type="GO" id="GO:0006099">
    <property type="term" value="P:tricarboxylic acid cycle"/>
    <property type="evidence" value="ECO:0007669"/>
    <property type="project" value="UniProtKB-UniRule"/>
</dbReference>
<dbReference type="CDD" id="cd01339">
    <property type="entry name" value="LDH-like_MDH"/>
    <property type="match status" value="1"/>
</dbReference>
<dbReference type="FunFam" id="3.40.50.720:FF:000018">
    <property type="entry name" value="Malate dehydrogenase"/>
    <property type="match status" value="1"/>
</dbReference>
<dbReference type="FunFam" id="3.90.110.10:FF:000004">
    <property type="entry name" value="Malate dehydrogenase"/>
    <property type="match status" value="1"/>
</dbReference>
<dbReference type="Gene3D" id="3.90.110.10">
    <property type="entry name" value="Lactate dehydrogenase/glycoside hydrolase, family 4, C-terminal"/>
    <property type="match status" value="1"/>
</dbReference>
<dbReference type="Gene3D" id="3.40.50.720">
    <property type="entry name" value="NAD(P)-binding Rossmann-like Domain"/>
    <property type="match status" value="1"/>
</dbReference>
<dbReference type="HAMAP" id="MF_00487">
    <property type="entry name" value="Malate_dehydrog_3"/>
    <property type="match status" value="1"/>
</dbReference>
<dbReference type="InterPro" id="IPR001557">
    <property type="entry name" value="L-lactate/malate_DH"/>
</dbReference>
<dbReference type="InterPro" id="IPR022383">
    <property type="entry name" value="Lactate/malate_DH_C"/>
</dbReference>
<dbReference type="InterPro" id="IPR001236">
    <property type="entry name" value="Lactate/malate_DH_N"/>
</dbReference>
<dbReference type="InterPro" id="IPR015955">
    <property type="entry name" value="Lactate_DH/Glyco_Ohase_4_C"/>
</dbReference>
<dbReference type="InterPro" id="IPR011275">
    <property type="entry name" value="Malate_DH_type3"/>
</dbReference>
<dbReference type="InterPro" id="IPR036291">
    <property type="entry name" value="NAD(P)-bd_dom_sf"/>
</dbReference>
<dbReference type="NCBIfam" id="TIGR01763">
    <property type="entry name" value="MalateDH_bact"/>
    <property type="match status" value="1"/>
</dbReference>
<dbReference type="NCBIfam" id="NF004863">
    <property type="entry name" value="PRK06223.1"/>
    <property type="match status" value="1"/>
</dbReference>
<dbReference type="PANTHER" id="PTHR43128">
    <property type="entry name" value="L-2-HYDROXYCARBOXYLATE DEHYDROGENASE (NAD(P)(+))"/>
    <property type="match status" value="1"/>
</dbReference>
<dbReference type="PANTHER" id="PTHR43128:SF16">
    <property type="entry name" value="L-LACTATE DEHYDROGENASE"/>
    <property type="match status" value="1"/>
</dbReference>
<dbReference type="Pfam" id="PF02866">
    <property type="entry name" value="Ldh_1_C"/>
    <property type="match status" value="1"/>
</dbReference>
<dbReference type="Pfam" id="PF00056">
    <property type="entry name" value="Ldh_1_N"/>
    <property type="match status" value="1"/>
</dbReference>
<dbReference type="PIRSF" id="PIRSF000102">
    <property type="entry name" value="Lac_mal_DH"/>
    <property type="match status" value="1"/>
</dbReference>
<dbReference type="PRINTS" id="PR00086">
    <property type="entry name" value="LLDHDRGNASE"/>
</dbReference>
<dbReference type="SUPFAM" id="SSF56327">
    <property type="entry name" value="LDH C-terminal domain-like"/>
    <property type="match status" value="1"/>
</dbReference>
<dbReference type="SUPFAM" id="SSF51735">
    <property type="entry name" value="NAD(P)-binding Rossmann-fold domains"/>
    <property type="match status" value="1"/>
</dbReference>
<accession>B1ZG93</accession>
<reference key="1">
    <citation type="submission" date="2008-04" db="EMBL/GenBank/DDBJ databases">
        <title>Complete sequence of chromosome of Methylobacterium populi BJ001.</title>
        <authorList>
            <consortium name="US DOE Joint Genome Institute"/>
            <person name="Copeland A."/>
            <person name="Lucas S."/>
            <person name="Lapidus A."/>
            <person name="Glavina del Rio T."/>
            <person name="Dalin E."/>
            <person name="Tice H."/>
            <person name="Bruce D."/>
            <person name="Goodwin L."/>
            <person name="Pitluck S."/>
            <person name="Chertkov O."/>
            <person name="Brettin T."/>
            <person name="Detter J.C."/>
            <person name="Han C."/>
            <person name="Kuske C.R."/>
            <person name="Schmutz J."/>
            <person name="Larimer F."/>
            <person name="Land M."/>
            <person name="Hauser L."/>
            <person name="Kyrpides N."/>
            <person name="Mikhailova N."/>
            <person name="Marx C."/>
            <person name="Richardson P."/>
        </authorList>
    </citation>
    <scope>NUCLEOTIDE SEQUENCE [LARGE SCALE GENOMIC DNA]</scope>
    <source>
        <strain>ATCC BAA-705 / NCIMB 13946 / BJ001</strain>
    </source>
</reference>
<comment type="function">
    <text evidence="1">Catalyzes the reversible oxidation of malate to oxaloacetate.</text>
</comment>
<comment type="catalytic activity">
    <reaction evidence="1">
        <text>(S)-malate + NAD(+) = oxaloacetate + NADH + H(+)</text>
        <dbReference type="Rhea" id="RHEA:21432"/>
        <dbReference type="ChEBI" id="CHEBI:15378"/>
        <dbReference type="ChEBI" id="CHEBI:15589"/>
        <dbReference type="ChEBI" id="CHEBI:16452"/>
        <dbReference type="ChEBI" id="CHEBI:57540"/>
        <dbReference type="ChEBI" id="CHEBI:57945"/>
        <dbReference type="EC" id="1.1.1.37"/>
    </reaction>
</comment>
<comment type="similarity">
    <text evidence="1">Belongs to the LDH/MDH superfamily. MDH type 3 family.</text>
</comment>
<proteinExistence type="inferred from homology"/>
<feature type="chain" id="PRO_1000126139" description="Malate dehydrogenase">
    <location>
        <begin position="1"/>
        <end position="320"/>
    </location>
</feature>
<feature type="active site" description="Proton acceptor" evidence="1">
    <location>
        <position position="176"/>
    </location>
</feature>
<feature type="binding site" evidence="1">
    <location>
        <begin position="10"/>
        <end position="15"/>
    </location>
    <ligand>
        <name>NAD(+)</name>
        <dbReference type="ChEBI" id="CHEBI:57540"/>
    </ligand>
</feature>
<feature type="binding site" evidence="1">
    <location>
        <position position="34"/>
    </location>
    <ligand>
        <name>NAD(+)</name>
        <dbReference type="ChEBI" id="CHEBI:57540"/>
    </ligand>
</feature>
<feature type="binding site" evidence="1">
    <location>
        <position position="83"/>
    </location>
    <ligand>
        <name>substrate</name>
    </ligand>
</feature>
<feature type="binding site" evidence="1">
    <location>
        <position position="89"/>
    </location>
    <ligand>
        <name>substrate</name>
    </ligand>
</feature>
<feature type="binding site" evidence="1">
    <location>
        <position position="96"/>
    </location>
    <ligand>
        <name>NAD(+)</name>
        <dbReference type="ChEBI" id="CHEBI:57540"/>
    </ligand>
</feature>
<feature type="binding site" evidence="1">
    <location>
        <begin position="119"/>
        <end position="121"/>
    </location>
    <ligand>
        <name>NAD(+)</name>
        <dbReference type="ChEBI" id="CHEBI:57540"/>
    </ligand>
</feature>
<feature type="binding site" evidence="1">
    <location>
        <position position="121"/>
    </location>
    <ligand>
        <name>substrate</name>
    </ligand>
</feature>
<feature type="binding site" evidence="1">
    <location>
        <position position="152"/>
    </location>
    <ligand>
        <name>substrate</name>
    </ligand>
</feature>
<organism>
    <name type="scientific">Methylorubrum populi (strain ATCC BAA-705 / NCIMB 13946 / BJ001)</name>
    <name type="common">Methylobacterium populi</name>
    <dbReference type="NCBI Taxonomy" id="441620"/>
    <lineage>
        <taxon>Bacteria</taxon>
        <taxon>Pseudomonadati</taxon>
        <taxon>Pseudomonadota</taxon>
        <taxon>Alphaproteobacteria</taxon>
        <taxon>Hyphomicrobiales</taxon>
        <taxon>Methylobacteriaceae</taxon>
        <taxon>Methylorubrum</taxon>
    </lineage>
</organism>